<dbReference type="EC" id="1.3.1.98" evidence="1"/>
<dbReference type="EMBL" id="CP000419">
    <property type="protein sequence ID" value="ABJ66652.1"/>
    <property type="molecule type" value="Genomic_DNA"/>
</dbReference>
<dbReference type="SMR" id="Q03JH0"/>
<dbReference type="KEGG" id="ste:STER_1497"/>
<dbReference type="HOGENOM" id="CLU_035304_1_1_9"/>
<dbReference type="UniPathway" id="UPA00219"/>
<dbReference type="GO" id="GO:0005829">
    <property type="term" value="C:cytosol"/>
    <property type="evidence" value="ECO:0007669"/>
    <property type="project" value="TreeGrafter"/>
</dbReference>
<dbReference type="GO" id="GO:0071949">
    <property type="term" value="F:FAD binding"/>
    <property type="evidence" value="ECO:0007669"/>
    <property type="project" value="InterPro"/>
</dbReference>
<dbReference type="GO" id="GO:0008762">
    <property type="term" value="F:UDP-N-acetylmuramate dehydrogenase activity"/>
    <property type="evidence" value="ECO:0007669"/>
    <property type="project" value="UniProtKB-UniRule"/>
</dbReference>
<dbReference type="GO" id="GO:0051301">
    <property type="term" value="P:cell division"/>
    <property type="evidence" value="ECO:0007669"/>
    <property type="project" value="UniProtKB-KW"/>
</dbReference>
<dbReference type="GO" id="GO:0071555">
    <property type="term" value="P:cell wall organization"/>
    <property type="evidence" value="ECO:0007669"/>
    <property type="project" value="UniProtKB-KW"/>
</dbReference>
<dbReference type="GO" id="GO:0009252">
    <property type="term" value="P:peptidoglycan biosynthetic process"/>
    <property type="evidence" value="ECO:0007669"/>
    <property type="project" value="UniProtKB-UniRule"/>
</dbReference>
<dbReference type="GO" id="GO:0008360">
    <property type="term" value="P:regulation of cell shape"/>
    <property type="evidence" value="ECO:0007669"/>
    <property type="project" value="UniProtKB-KW"/>
</dbReference>
<dbReference type="Gene3D" id="3.30.465.10">
    <property type="match status" value="1"/>
</dbReference>
<dbReference type="Gene3D" id="3.90.78.10">
    <property type="entry name" value="UDP-N-acetylenolpyruvoylglucosamine reductase, C-terminal domain"/>
    <property type="match status" value="1"/>
</dbReference>
<dbReference type="Gene3D" id="3.30.43.10">
    <property type="entry name" value="Uridine Diphospho-n-acetylenolpyruvylglucosamine Reductase, domain 2"/>
    <property type="match status" value="1"/>
</dbReference>
<dbReference type="HAMAP" id="MF_00037">
    <property type="entry name" value="MurB"/>
    <property type="match status" value="1"/>
</dbReference>
<dbReference type="InterPro" id="IPR016166">
    <property type="entry name" value="FAD-bd_PCMH"/>
</dbReference>
<dbReference type="InterPro" id="IPR036318">
    <property type="entry name" value="FAD-bd_PCMH-like_sf"/>
</dbReference>
<dbReference type="InterPro" id="IPR016167">
    <property type="entry name" value="FAD-bd_PCMH_sub1"/>
</dbReference>
<dbReference type="InterPro" id="IPR016169">
    <property type="entry name" value="FAD-bd_PCMH_sub2"/>
</dbReference>
<dbReference type="InterPro" id="IPR003170">
    <property type="entry name" value="MurB"/>
</dbReference>
<dbReference type="InterPro" id="IPR011601">
    <property type="entry name" value="MurB_C"/>
</dbReference>
<dbReference type="InterPro" id="IPR036635">
    <property type="entry name" value="MurB_C_sf"/>
</dbReference>
<dbReference type="InterPro" id="IPR006094">
    <property type="entry name" value="Oxid_FAD_bind_N"/>
</dbReference>
<dbReference type="NCBIfam" id="TIGR00179">
    <property type="entry name" value="murB"/>
    <property type="match status" value="1"/>
</dbReference>
<dbReference type="NCBIfam" id="NF010480">
    <property type="entry name" value="PRK13905.1"/>
    <property type="match status" value="1"/>
</dbReference>
<dbReference type="PANTHER" id="PTHR21071">
    <property type="entry name" value="UDP-N-ACETYLENOLPYRUVOYLGLUCOSAMINE REDUCTASE"/>
    <property type="match status" value="1"/>
</dbReference>
<dbReference type="PANTHER" id="PTHR21071:SF4">
    <property type="entry name" value="UDP-N-ACETYLENOLPYRUVOYLGLUCOSAMINE REDUCTASE"/>
    <property type="match status" value="1"/>
</dbReference>
<dbReference type="Pfam" id="PF01565">
    <property type="entry name" value="FAD_binding_4"/>
    <property type="match status" value="1"/>
</dbReference>
<dbReference type="Pfam" id="PF02873">
    <property type="entry name" value="MurB_C"/>
    <property type="match status" value="1"/>
</dbReference>
<dbReference type="SUPFAM" id="SSF56176">
    <property type="entry name" value="FAD-binding/transporter-associated domain-like"/>
    <property type="match status" value="1"/>
</dbReference>
<dbReference type="SUPFAM" id="SSF56194">
    <property type="entry name" value="Uridine diphospho-N-Acetylenolpyruvylglucosamine reductase, MurB, C-terminal domain"/>
    <property type="match status" value="1"/>
</dbReference>
<dbReference type="PROSITE" id="PS51387">
    <property type="entry name" value="FAD_PCMH"/>
    <property type="match status" value="1"/>
</dbReference>
<comment type="function">
    <text evidence="1">Cell wall formation.</text>
</comment>
<comment type="catalytic activity">
    <reaction evidence="1">
        <text>UDP-N-acetyl-alpha-D-muramate + NADP(+) = UDP-N-acetyl-3-O-(1-carboxyvinyl)-alpha-D-glucosamine + NADPH + H(+)</text>
        <dbReference type="Rhea" id="RHEA:12248"/>
        <dbReference type="ChEBI" id="CHEBI:15378"/>
        <dbReference type="ChEBI" id="CHEBI:57783"/>
        <dbReference type="ChEBI" id="CHEBI:58349"/>
        <dbReference type="ChEBI" id="CHEBI:68483"/>
        <dbReference type="ChEBI" id="CHEBI:70757"/>
        <dbReference type="EC" id="1.3.1.98"/>
    </reaction>
</comment>
<comment type="cofactor">
    <cofactor evidence="1">
        <name>FAD</name>
        <dbReference type="ChEBI" id="CHEBI:57692"/>
    </cofactor>
</comment>
<comment type="pathway">
    <text evidence="1">Cell wall biogenesis; peptidoglycan biosynthesis.</text>
</comment>
<comment type="subcellular location">
    <subcellularLocation>
        <location evidence="1">Cytoplasm</location>
    </subcellularLocation>
</comment>
<comment type="similarity">
    <text evidence="1">Belongs to the MurB family.</text>
</comment>
<name>MURB_STRTD</name>
<gene>
    <name evidence="1" type="primary">murB</name>
    <name type="ordered locus">STER_1497</name>
</gene>
<evidence type="ECO:0000255" key="1">
    <source>
        <dbReference type="HAMAP-Rule" id="MF_00037"/>
    </source>
</evidence>
<proteinExistence type="inferred from homology"/>
<feature type="chain" id="PRO_1000002924" description="UDP-N-acetylenolpyruvoylglucosamine reductase">
    <location>
        <begin position="1"/>
        <end position="304"/>
    </location>
</feature>
<feature type="domain" description="FAD-binding PCMH-type" evidence="1">
    <location>
        <begin position="31"/>
        <end position="196"/>
    </location>
</feature>
<feature type="active site" evidence="1">
    <location>
        <position position="175"/>
    </location>
</feature>
<feature type="active site" description="Proton donor" evidence="1">
    <location>
        <position position="225"/>
    </location>
</feature>
<feature type="active site" evidence="1">
    <location>
        <position position="295"/>
    </location>
</feature>
<organism>
    <name type="scientific">Streptococcus thermophilus (strain ATCC BAA-491 / LMD-9)</name>
    <dbReference type="NCBI Taxonomy" id="322159"/>
    <lineage>
        <taxon>Bacteria</taxon>
        <taxon>Bacillati</taxon>
        <taxon>Bacillota</taxon>
        <taxon>Bacilli</taxon>
        <taxon>Lactobacillales</taxon>
        <taxon>Streptococcaceae</taxon>
        <taxon>Streptococcus</taxon>
    </lineage>
</organism>
<accession>Q03JH0</accession>
<protein>
    <recommendedName>
        <fullName evidence="1">UDP-N-acetylenolpyruvoylglucosamine reductase</fullName>
        <ecNumber evidence="1">1.3.1.98</ecNumber>
    </recommendedName>
    <alternativeName>
        <fullName evidence="1">UDP-N-acetylmuramate dehydrogenase</fullName>
    </alternativeName>
</protein>
<sequence length="304" mass="33469">MGINMLDELKEDLVGIDIRFDEPLKRYTYTKVGGPADYLAFPRNRYELSRIVKFANKHNIPWMVLGNASNLIVRDGGIRGFVIMFDKLNGIAVNGYQVEAEAGANLIATTKVACFHSLTGFEFAAGIPGSIGGAVFMNAGAYGGEIAHILVSAQVLTKDGDIRTIDARDMRFGYRRSVLQETGEVIISAKFNLKPGDYEQIKHEMNRLNHLRELKQPLEYPSCGSVFKRPPGHFAGQLIMEANLKGHRIGGVEVSTKHAGFMVNVDQGTAKDYEDLIADVIAKVKENSGVTLEPEVRIIGDKLN</sequence>
<keyword id="KW-0131">Cell cycle</keyword>
<keyword id="KW-0132">Cell division</keyword>
<keyword id="KW-0133">Cell shape</keyword>
<keyword id="KW-0961">Cell wall biogenesis/degradation</keyword>
<keyword id="KW-0963">Cytoplasm</keyword>
<keyword id="KW-0274">FAD</keyword>
<keyword id="KW-0285">Flavoprotein</keyword>
<keyword id="KW-0521">NADP</keyword>
<keyword id="KW-0560">Oxidoreductase</keyword>
<keyword id="KW-0573">Peptidoglycan synthesis</keyword>
<reference key="1">
    <citation type="journal article" date="2006" name="Proc. Natl. Acad. Sci. U.S.A.">
        <title>Comparative genomics of the lactic acid bacteria.</title>
        <authorList>
            <person name="Makarova K.S."/>
            <person name="Slesarev A."/>
            <person name="Wolf Y.I."/>
            <person name="Sorokin A."/>
            <person name="Mirkin B."/>
            <person name="Koonin E.V."/>
            <person name="Pavlov A."/>
            <person name="Pavlova N."/>
            <person name="Karamychev V."/>
            <person name="Polouchine N."/>
            <person name="Shakhova V."/>
            <person name="Grigoriev I."/>
            <person name="Lou Y."/>
            <person name="Rohksar D."/>
            <person name="Lucas S."/>
            <person name="Huang K."/>
            <person name="Goodstein D.M."/>
            <person name="Hawkins T."/>
            <person name="Plengvidhya V."/>
            <person name="Welker D."/>
            <person name="Hughes J."/>
            <person name="Goh Y."/>
            <person name="Benson A."/>
            <person name="Baldwin K."/>
            <person name="Lee J.-H."/>
            <person name="Diaz-Muniz I."/>
            <person name="Dosti B."/>
            <person name="Smeianov V."/>
            <person name="Wechter W."/>
            <person name="Barabote R."/>
            <person name="Lorca G."/>
            <person name="Altermann E."/>
            <person name="Barrangou R."/>
            <person name="Ganesan B."/>
            <person name="Xie Y."/>
            <person name="Rawsthorne H."/>
            <person name="Tamir D."/>
            <person name="Parker C."/>
            <person name="Breidt F."/>
            <person name="Broadbent J.R."/>
            <person name="Hutkins R."/>
            <person name="O'Sullivan D."/>
            <person name="Steele J."/>
            <person name="Unlu G."/>
            <person name="Saier M.H. Jr."/>
            <person name="Klaenhammer T."/>
            <person name="Richardson P."/>
            <person name="Kozyavkin S."/>
            <person name="Weimer B.C."/>
            <person name="Mills D.A."/>
        </authorList>
    </citation>
    <scope>NUCLEOTIDE SEQUENCE [LARGE SCALE GENOMIC DNA]</scope>
    <source>
        <strain>ATCC BAA-491 / LMD-9</strain>
    </source>
</reference>